<sequence>MKLKISFLILVLFSVFFAIEGIIKWFPASVNGKGHSSCTNGLEMTEEDFCKMLCGIDGKLRESKCVDHWCYCSQILFP</sequence>
<organism>
    <name type="scientific">Olivierus martensii</name>
    <name type="common">Manchurian scorpion</name>
    <name type="synonym">Mesobuthus martensii</name>
    <dbReference type="NCBI Taxonomy" id="34649"/>
    <lineage>
        <taxon>Eukaryota</taxon>
        <taxon>Metazoa</taxon>
        <taxon>Ecdysozoa</taxon>
        <taxon>Arthropoda</taxon>
        <taxon>Chelicerata</taxon>
        <taxon>Arachnida</taxon>
        <taxon>Scorpiones</taxon>
        <taxon>Buthida</taxon>
        <taxon>Buthoidea</taxon>
        <taxon>Buthidae</taxon>
        <taxon>Olivierus</taxon>
    </lineage>
</organism>
<protein>
    <recommendedName>
        <fullName evidence="4">Toxin BmTxKS4</fullName>
    </recommendedName>
    <alternativeName>
        <fullName>KS3 toxin</fullName>
    </alternativeName>
</protein>
<evidence type="ECO:0000250" key="1"/>
<evidence type="ECO:0000255" key="2"/>
<evidence type="ECO:0000269" key="3">
    <source>
    </source>
</evidence>
<evidence type="ECO:0000303" key="4">
    <source>
    </source>
</evidence>
<evidence type="ECO:0000305" key="5"/>
<reference key="1">
    <citation type="journal article" date="2004" name="J. Biochem. Mol. Toxicol.">
        <title>Molecular cloning, genomic organization and functional characterization of a new short-chain potassium channel toxin-like peptide BmTxKS4 from Buthus martensii Karsch(BmK).</title>
        <authorList>
            <person name="Sheng J."/>
            <person name="Xu X."/>
            <person name="Cao Z."/>
            <person name="Liu W."/>
            <person name="Wu Y."/>
            <person name="Zhu S."/>
            <person name="Zeng X."/>
            <person name="Jiang D."/>
            <person name="Mao X."/>
            <person name="Liu H."/>
            <person name="Li W.-X."/>
            <person name="Wang T."/>
        </authorList>
    </citation>
    <scope>NUCLEOTIDE SEQUENCE [GENOMIC DNA / MRNA]</scope>
    <scope>FUNCTION</scope>
    <source>
        <tissue>Venom gland</tissue>
    </source>
</reference>
<comment type="function">
    <text evidence="3">Reversibly inhibits potassium channels.</text>
</comment>
<comment type="subcellular location">
    <subcellularLocation>
        <location evidence="1">Secreted</location>
    </subcellularLocation>
</comment>
<comment type="tissue specificity">
    <text evidence="5">Expressed by the venom gland.</text>
</comment>
<comment type="PTM">
    <text evidence="1">Contains 3 disulfide bonds.</text>
</comment>
<proteinExistence type="inferred from homology"/>
<feature type="signal peptide" evidence="2">
    <location>
        <begin position="1"/>
        <end position="21"/>
    </location>
</feature>
<feature type="propeptide" id="PRO_5000090613" evidence="2">
    <location>
        <begin position="22"/>
        <end position="32"/>
    </location>
</feature>
<feature type="chain" id="PRO_5000090614" description="Toxin BmTxKS4">
    <location>
        <begin position="33"/>
        <end position="78"/>
    </location>
</feature>
<accession>Q5F1N4</accession>
<dbReference type="EMBL" id="AY278247">
    <property type="protein sequence ID" value="AAQ19046.1"/>
    <property type="molecule type" value="mRNA"/>
</dbReference>
<dbReference type="SMR" id="Q5F1N4"/>
<dbReference type="GO" id="GO:0005576">
    <property type="term" value="C:extracellular region"/>
    <property type="evidence" value="ECO:0007669"/>
    <property type="project" value="UniProtKB-SubCell"/>
</dbReference>
<dbReference type="GO" id="GO:0015459">
    <property type="term" value="F:potassium channel regulator activity"/>
    <property type="evidence" value="ECO:0007669"/>
    <property type="project" value="UniProtKB-KW"/>
</dbReference>
<dbReference type="GO" id="GO:0090729">
    <property type="term" value="F:toxin activity"/>
    <property type="evidence" value="ECO:0007669"/>
    <property type="project" value="UniProtKB-KW"/>
</dbReference>
<keyword id="KW-1015">Disulfide bond</keyword>
<keyword id="KW-0872">Ion channel impairing toxin</keyword>
<keyword id="KW-0632">Potassium channel impairing toxin</keyword>
<keyword id="KW-0964">Secreted</keyword>
<keyword id="KW-0732">Signal</keyword>
<keyword id="KW-0800">Toxin</keyword>
<name>KS4_OLIMR</name>